<feature type="chain" id="PRO_0000065922" description="Protein VraX">
    <location>
        <begin position="1"/>
        <end position="55"/>
    </location>
</feature>
<organism>
    <name type="scientific">Staphylococcus aureus (strain N315)</name>
    <dbReference type="NCBI Taxonomy" id="158879"/>
    <lineage>
        <taxon>Bacteria</taxon>
        <taxon>Bacillati</taxon>
        <taxon>Bacillota</taxon>
        <taxon>Bacilli</taxon>
        <taxon>Bacillales</taxon>
        <taxon>Staphylococcaceae</taxon>
        <taxon>Staphylococcus</taxon>
    </lineage>
</organism>
<accession>Q99W32</accession>
<accession>Q7DI46</accession>
<dbReference type="EMBL" id="AB050664">
    <property type="protein sequence ID" value="BAB69779.1"/>
    <property type="molecule type" value="Genomic_DNA"/>
</dbReference>
<dbReference type="EMBL" id="BA000018">
    <property type="protein sequence ID" value="BAB41768.1"/>
    <property type="molecule type" value="Genomic_DNA"/>
</dbReference>
<dbReference type="PIR" id="E89826">
    <property type="entry name" value="E89826"/>
</dbReference>
<dbReference type="RefSeq" id="WP_000587958.1">
    <property type="nucleotide sequence ID" value="NC_002745.2"/>
</dbReference>
<dbReference type="EnsemblBacteria" id="BAB41768">
    <property type="protein sequence ID" value="BAB41768"/>
    <property type="gene ID" value="BAB41768"/>
</dbReference>
<dbReference type="GeneID" id="98344911"/>
<dbReference type="KEGG" id="sau:SAS016"/>
<dbReference type="HOGENOM" id="CLU_212227_0_0_9"/>
<dbReference type="InterPro" id="IPR035374">
    <property type="entry name" value="VraX"/>
</dbReference>
<dbReference type="Pfam" id="PF17412">
    <property type="entry name" value="VraX"/>
    <property type="match status" value="1"/>
</dbReference>
<name>VRAX_STAAN</name>
<gene>
    <name type="primary">vraX</name>
    <name type="ordered locus">SA0536.1</name>
</gene>
<reference key="1">
    <citation type="submission" date="2000-10" db="EMBL/GenBank/DDBJ databases">
        <title>Identification of differentially expressed genes of Staphylococcus aureus in response to and in raised resisistance to imipenem.</title>
        <authorList>
            <person name="Kuroda-Murakami H."/>
            <person name="Kuroda M."/>
            <person name="Hiramatsu K."/>
        </authorList>
    </citation>
    <scope>NUCLEOTIDE SEQUENCE [GENOMIC DNA]</scope>
</reference>
<reference key="2">
    <citation type="journal article" date="2001" name="Lancet">
        <title>Whole genome sequencing of meticillin-resistant Staphylococcus aureus.</title>
        <authorList>
            <person name="Kuroda M."/>
            <person name="Ohta T."/>
            <person name="Uchiyama I."/>
            <person name="Baba T."/>
            <person name="Yuzawa H."/>
            <person name="Kobayashi I."/>
            <person name="Cui L."/>
            <person name="Oguchi A."/>
            <person name="Aoki K."/>
            <person name="Nagai Y."/>
            <person name="Lian J.-Q."/>
            <person name="Ito T."/>
            <person name="Kanamori M."/>
            <person name="Matsumaru H."/>
            <person name="Maruyama A."/>
            <person name="Murakami H."/>
            <person name="Hosoyama A."/>
            <person name="Mizutani-Ui Y."/>
            <person name="Takahashi N.K."/>
            <person name="Sawano T."/>
            <person name="Inoue R."/>
            <person name="Kaito C."/>
            <person name="Sekimizu K."/>
            <person name="Hirakawa H."/>
            <person name="Kuhara S."/>
            <person name="Goto S."/>
            <person name="Yabuzaki J."/>
            <person name="Kanehisa M."/>
            <person name="Yamashita A."/>
            <person name="Oshima K."/>
            <person name="Furuya K."/>
            <person name="Yoshino C."/>
            <person name="Shiba T."/>
            <person name="Hattori M."/>
            <person name="Ogasawara N."/>
            <person name="Hayashi H."/>
            <person name="Hiramatsu K."/>
        </authorList>
    </citation>
    <scope>NUCLEOTIDE SEQUENCE [LARGE SCALE GENOMIC DNA]</scope>
    <source>
        <strain>N315</strain>
    </source>
</reference>
<sequence>MIIYRQYHHEGAPVYEIITKTFQHVSIKCDDSFSDTEIFKLLSLLQDDIDHMKVS</sequence>
<protein>
    <recommendedName>
        <fullName>Protein VraX</fullName>
    </recommendedName>
</protein>
<proteinExistence type="predicted"/>